<comment type="function">
    <text evidence="1">Located on the platform of the 30S subunit, it bridges several disparate RNA helices of the 16S rRNA. Forms part of the Shine-Dalgarno cleft in the 70S ribosome.</text>
</comment>
<comment type="subunit">
    <text evidence="1">Part of the 30S ribosomal subunit. Interacts with proteins S7 and S18. Binds to IF-3.</text>
</comment>
<comment type="similarity">
    <text evidence="1">Belongs to the universal ribosomal protein uS11 family.</text>
</comment>
<feature type="chain" id="PRO_1000141119" description="Small ribosomal subunit protein uS11">
    <location>
        <begin position="1"/>
        <end position="129"/>
    </location>
</feature>
<reference key="1">
    <citation type="journal article" date="2008" name="BMC Genomics">
        <title>Complete genome of Phenylobacterium zucineum - a novel facultative intracellular bacterium isolated from human erythroleukemia cell line K562.</title>
        <authorList>
            <person name="Luo Y."/>
            <person name="Xu X."/>
            <person name="Ding Z."/>
            <person name="Liu Z."/>
            <person name="Zhang B."/>
            <person name="Yan Z."/>
            <person name="Sun J."/>
            <person name="Hu S."/>
            <person name="Hu X."/>
        </authorList>
    </citation>
    <scope>NUCLEOTIDE SEQUENCE [LARGE SCALE GENOMIC DNA]</scope>
    <source>
        <strain>HLK1</strain>
    </source>
</reference>
<dbReference type="EMBL" id="CP000747">
    <property type="protein sequence ID" value="ACG77667.1"/>
    <property type="molecule type" value="Genomic_DNA"/>
</dbReference>
<dbReference type="RefSeq" id="WP_012521811.1">
    <property type="nucleotide sequence ID" value="NC_011144.1"/>
</dbReference>
<dbReference type="SMR" id="B4R8P0"/>
<dbReference type="STRING" id="450851.PHZ_c1253"/>
<dbReference type="KEGG" id="pzu:PHZ_c1253"/>
<dbReference type="eggNOG" id="COG0100">
    <property type="taxonomic scope" value="Bacteria"/>
</dbReference>
<dbReference type="HOGENOM" id="CLU_072439_5_0_5"/>
<dbReference type="OrthoDB" id="9806415at2"/>
<dbReference type="Proteomes" id="UP000001868">
    <property type="component" value="Chromosome"/>
</dbReference>
<dbReference type="GO" id="GO:1990904">
    <property type="term" value="C:ribonucleoprotein complex"/>
    <property type="evidence" value="ECO:0007669"/>
    <property type="project" value="UniProtKB-KW"/>
</dbReference>
<dbReference type="GO" id="GO:0005840">
    <property type="term" value="C:ribosome"/>
    <property type="evidence" value="ECO:0007669"/>
    <property type="project" value="UniProtKB-KW"/>
</dbReference>
<dbReference type="GO" id="GO:0019843">
    <property type="term" value="F:rRNA binding"/>
    <property type="evidence" value="ECO:0007669"/>
    <property type="project" value="UniProtKB-UniRule"/>
</dbReference>
<dbReference type="GO" id="GO:0003735">
    <property type="term" value="F:structural constituent of ribosome"/>
    <property type="evidence" value="ECO:0007669"/>
    <property type="project" value="InterPro"/>
</dbReference>
<dbReference type="GO" id="GO:0006412">
    <property type="term" value="P:translation"/>
    <property type="evidence" value="ECO:0007669"/>
    <property type="project" value="UniProtKB-UniRule"/>
</dbReference>
<dbReference type="FunFam" id="3.30.420.80:FF:000001">
    <property type="entry name" value="30S ribosomal protein S11"/>
    <property type="match status" value="1"/>
</dbReference>
<dbReference type="Gene3D" id="3.30.420.80">
    <property type="entry name" value="Ribosomal protein S11"/>
    <property type="match status" value="1"/>
</dbReference>
<dbReference type="HAMAP" id="MF_01310">
    <property type="entry name" value="Ribosomal_uS11"/>
    <property type="match status" value="1"/>
</dbReference>
<dbReference type="InterPro" id="IPR001971">
    <property type="entry name" value="Ribosomal_uS11"/>
</dbReference>
<dbReference type="InterPro" id="IPR019981">
    <property type="entry name" value="Ribosomal_uS11_bac-type"/>
</dbReference>
<dbReference type="InterPro" id="IPR018102">
    <property type="entry name" value="Ribosomal_uS11_CS"/>
</dbReference>
<dbReference type="InterPro" id="IPR036967">
    <property type="entry name" value="Ribosomal_uS11_sf"/>
</dbReference>
<dbReference type="NCBIfam" id="NF003698">
    <property type="entry name" value="PRK05309.1"/>
    <property type="match status" value="1"/>
</dbReference>
<dbReference type="NCBIfam" id="TIGR03632">
    <property type="entry name" value="uS11_bact"/>
    <property type="match status" value="1"/>
</dbReference>
<dbReference type="PANTHER" id="PTHR11759">
    <property type="entry name" value="40S RIBOSOMAL PROTEIN S14/30S RIBOSOMAL PROTEIN S11"/>
    <property type="match status" value="1"/>
</dbReference>
<dbReference type="Pfam" id="PF00411">
    <property type="entry name" value="Ribosomal_S11"/>
    <property type="match status" value="1"/>
</dbReference>
<dbReference type="PIRSF" id="PIRSF002131">
    <property type="entry name" value="Ribosomal_S11"/>
    <property type="match status" value="1"/>
</dbReference>
<dbReference type="SUPFAM" id="SSF53137">
    <property type="entry name" value="Translational machinery components"/>
    <property type="match status" value="1"/>
</dbReference>
<dbReference type="PROSITE" id="PS00054">
    <property type="entry name" value="RIBOSOMAL_S11"/>
    <property type="match status" value="1"/>
</dbReference>
<keyword id="KW-1185">Reference proteome</keyword>
<keyword id="KW-0687">Ribonucleoprotein</keyword>
<keyword id="KW-0689">Ribosomal protein</keyword>
<keyword id="KW-0694">RNA-binding</keyword>
<keyword id="KW-0699">rRNA-binding</keyword>
<protein>
    <recommendedName>
        <fullName evidence="1">Small ribosomal subunit protein uS11</fullName>
    </recommendedName>
    <alternativeName>
        <fullName evidence="2">30S ribosomal protein S11</fullName>
    </alternativeName>
</protein>
<evidence type="ECO:0000255" key="1">
    <source>
        <dbReference type="HAMAP-Rule" id="MF_01310"/>
    </source>
</evidence>
<evidence type="ECO:0000305" key="2"/>
<name>RS11_PHEZH</name>
<accession>B4R8P0</accession>
<sequence length="129" mass="13827">MAKEPARVKRRERKNITSGVAHVNASFNNTMVTITDAQGNTISWSSAGLMGFKGSRKSTPYAAQMAAEDAGRKAAEHGVRTLEVNVSGPGSGRESALRALQAVGMTITTIRDVTPIPHNGCRPPKRRRV</sequence>
<gene>
    <name evidence="1" type="primary">rpsK</name>
    <name type="ordered locus">PHZ_c1253</name>
</gene>
<organism>
    <name type="scientific">Phenylobacterium zucineum (strain HLK1)</name>
    <dbReference type="NCBI Taxonomy" id="450851"/>
    <lineage>
        <taxon>Bacteria</taxon>
        <taxon>Pseudomonadati</taxon>
        <taxon>Pseudomonadota</taxon>
        <taxon>Alphaproteobacteria</taxon>
        <taxon>Caulobacterales</taxon>
        <taxon>Caulobacteraceae</taxon>
        <taxon>Phenylobacterium</taxon>
    </lineage>
</organism>
<proteinExistence type="inferred from homology"/>